<sequence length="658" mass="74476">MSDMFLPARMRKLKIITLDQYSDSVVRSLHEEGVTQIDDISERIQQDAEWRQILKPSRATPYTGRVSSLLMKTSGILDFLGSVAAEEKGLRDTIREFINPPIFEKREVEELDTESLIERAEETLGRVESETRVMEEKLNELDSERSAVESSLSVAEKLKDFDIDFSDLQDSEYITGIAGRITAENLPELRDKLADITDELVISDREGENKAERILIIVTLKKHADSIASVLRRMEFERFEISELQGRPSEIISSSKTRLEEISRERKEIISKLRDINAEWEDELLVLREQLEIEKERNEVFSLFGETRKTVMLEAWVPLKEADRVIAVVEESSEGTALTDLEDPDPEEVPVLLDNPRFAKPYETFVEMYSPLKYNEIDPTIFMAFVFPFFFGFCLTDAGYGIIDALIGFILYRGLGKVNNFMRNFGIIMMSCGVWAFILGMVTNGFIGDFFPRFFNITLPTVIPAIDAFVNPQNILIMALTVGVLHINFGLILGARNNIRLGNMREALGSQIVWLILELGIILYLVGGMIFGAPLIILAFAMLLYYNGLFGLMDVSGFLGTLLSYARLLALCLSTGGIAMTVNILTGLSYEMIPVIGVVLAPIIFVFGHIANNAFQSLGAFINSLRLHYVEFFAQFYMGGKNKFNAFRAERNFTKIRR</sequence>
<evidence type="ECO:0000250" key="1">
    <source>
        <dbReference type="UniProtKB" id="Q57675"/>
    </source>
</evidence>
<evidence type="ECO:0000255" key="2"/>
<evidence type="ECO:0000305" key="3"/>
<feature type="chain" id="PRO_0000119231" description="A-type ATP synthase subunit I">
    <location>
        <begin position="1"/>
        <end position="658"/>
    </location>
</feature>
<feature type="transmembrane region" description="Helical" evidence="2">
    <location>
        <begin position="383"/>
        <end position="403"/>
    </location>
</feature>
<feature type="transmembrane region" description="Helical" evidence="2">
    <location>
        <begin position="427"/>
        <end position="447"/>
    </location>
</feature>
<feature type="transmembrane region" description="Helical" evidence="2">
    <location>
        <begin position="475"/>
        <end position="495"/>
    </location>
</feature>
<feature type="transmembrane region" description="Helical" evidence="2">
    <location>
        <begin position="507"/>
        <end position="526"/>
    </location>
</feature>
<feature type="transmembrane region" description="Helical" evidence="2">
    <location>
        <begin position="530"/>
        <end position="552"/>
    </location>
</feature>
<feature type="transmembrane region" description="Helical" evidence="2">
    <location>
        <begin position="568"/>
        <end position="588"/>
    </location>
</feature>
<feature type="transmembrane region" description="Helical" evidence="2">
    <location>
        <begin position="591"/>
        <end position="611"/>
    </location>
</feature>
<keyword id="KW-1003">Cell membrane</keyword>
<keyword id="KW-0375">Hydrogen ion transport</keyword>
<keyword id="KW-0406">Ion transport</keyword>
<keyword id="KW-0472">Membrane</keyword>
<keyword id="KW-1185">Reference proteome</keyword>
<keyword id="KW-0812">Transmembrane</keyword>
<keyword id="KW-1133">Transmembrane helix</keyword>
<keyword id="KW-0813">Transport</keyword>
<dbReference type="EMBL" id="AE000666">
    <property type="protein sequence ID" value="AAB85456.1"/>
    <property type="molecule type" value="Genomic_DNA"/>
</dbReference>
<dbReference type="PIR" id="E69228">
    <property type="entry name" value="E69228"/>
</dbReference>
<dbReference type="SMR" id="O27041"/>
<dbReference type="FunCoup" id="O27041">
    <property type="interactions" value="32"/>
</dbReference>
<dbReference type="IntAct" id="O27041">
    <property type="interactions" value="2"/>
</dbReference>
<dbReference type="STRING" id="187420.MTH_960"/>
<dbReference type="PaxDb" id="187420-MTH_960"/>
<dbReference type="EnsemblBacteria" id="AAB85456">
    <property type="protein sequence ID" value="AAB85456"/>
    <property type="gene ID" value="MTH_960"/>
</dbReference>
<dbReference type="KEGG" id="mth:MTH_960"/>
<dbReference type="PATRIC" id="fig|187420.15.peg.943"/>
<dbReference type="HOGENOM" id="CLU_025558_1_0_2"/>
<dbReference type="InParanoid" id="O27041"/>
<dbReference type="Proteomes" id="UP000005223">
    <property type="component" value="Chromosome"/>
</dbReference>
<dbReference type="GO" id="GO:0005886">
    <property type="term" value="C:plasma membrane"/>
    <property type="evidence" value="ECO:0007669"/>
    <property type="project" value="UniProtKB-SubCell"/>
</dbReference>
<dbReference type="GO" id="GO:0033179">
    <property type="term" value="C:proton-transporting V-type ATPase, V0 domain"/>
    <property type="evidence" value="ECO:0007669"/>
    <property type="project" value="InterPro"/>
</dbReference>
<dbReference type="GO" id="GO:0016471">
    <property type="term" value="C:vacuolar proton-transporting V-type ATPase complex"/>
    <property type="evidence" value="ECO:0007669"/>
    <property type="project" value="TreeGrafter"/>
</dbReference>
<dbReference type="GO" id="GO:0051117">
    <property type="term" value="F:ATPase binding"/>
    <property type="evidence" value="ECO:0007669"/>
    <property type="project" value="TreeGrafter"/>
</dbReference>
<dbReference type="GO" id="GO:0046961">
    <property type="term" value="F:proton-transporting ATPase activity, rotational mechanism"/>
    <property type="evidence" value="ECO:0007669"/>
    <property type="project" value="InterPro"/>
</dbReference>
<dbReference type="GO" id="GO:0007035">
    <property type="term" value="P:vacuolar acidification"/>
    <property type="evidence" value="ECO:0007669"/>
    <property type="project" value="TreeGrafter"/>
</dbReference>
<dbReference type="Gene3D" id="1.20.1460.20">
    <property type="match status" value="1"/>
</dbReference>
<dbReference type="Gene3D" id="3.30.70.2170">
    <property type="match status" value="1"/>
</dbReference>
<dbReference type="Gene3D" id="3.30.70.2750">
    <property type="match status" value="1"/>
</dbReference>
<dbReference type="InterPro" id="IPR002490">
    <property type="entry name" value="V-ATPase_116kDa_su"/>
</dbReference>
<dbReference type="NCBIfam" id="NF004428">
    <property type="entry name" value="PRK05771.2-1"/>
    <property type="match status" value="1"/>
</dbReference>
<dbReference type="PANTHER" id="PTHR11629:SF63">
    <property type="entry name" value="V-TYPE PROTON ATPASE SUBUNIT A"/>
    <property type="match status" value="1"/>
</dbReference>
<dbReference type="PANTHER" id="PTHR11629">
    <property type="entry name" value="VACUOLAR PROTON ATPASES"/>
    <property type="match status" value="1"/>
</dbReference>
<dbReference type="Pfam" id="PF01496">
    <property type="entry name" value="V_ATPase_I"/>
    <property type="match status" value="1"/>
</dbReference>
<reference key="1">
    <citation type="journal article" date="1997" name="J. Bacteriol.">
        <title>Complete genome sequence of Methanobacterium thermoautotrophicum deltaH: functional analysis and comparative genomics.</title>
        <authorList>
            <person name="Smith D.R."/>
            <person name="Doucette-Stamm L.A."/>
            <person name="Deloughery C."/>
            <person name="Lee H.-M."/>
            <person name="Dubois J."/>
            <person name="Aldredge T."/>
            <person name="Bashirzadeh R."/>
            <person name="Blakely D."/>
            <person name="Cook R."/>
            <person name="Gilbert K."/>
            <person name="Harrison D."/>
            <person name="Hoang L."/>
            <person name="Keagle P."/>
            <person name="Lumm W."/>
            <person name="Pothier B."/>
            <person name="Qiu D."/>
            <person name="Spadafora R."/>
            <person name="Vicare R."/>
            <person name="Wang Y."/>
            <person name="Wierzbowski J."/>
            <person name="Gibson R."/>
            <person name="Jiwani N."/>
            <person name="Caruso A."/>
            <person name="Bush D."/>
            <person name="Safer H."/>
            <person name="Patwell D."/>
            <person name="Prabhakar S."/>
            <person name="McDougall S."/>
            <person name="Shimer G."/>
            <person name="Goyal A."/>
            <person name="Pietrovski S."/>
            <person name="Church G.M."/>
            <person name="Daniels C.J."/>
            <person name="Mao J.-I."/>
            <person name="Rice P."/>
            <person name="Noelling J."/>
            <person name="Reeve J.N."/>
        </authorList>
    </citation>
    <scope>NUCLEOTIDE SEQUENCE [LARGE SCALE GENOMIC DNA]</scope>
    <source>
        <strain>ATCC 29096 / DSM 1053 / JCM 10044 / NBRC 100330 / Delta H</strain>
    </source>
</reference>
<proteinExistence type="inferred from homology"/>
<name>AATI_METTH</name>
<gene>
    <name evidence="3" type="primary">atpI</name>
    <name type="ordered locus">MTH_960</name>
</gene>
<organism>
    <name type="scientific">Methanothermobacter thermautotrophicus (strain ATCC 29096 / DSM 1053 / JCM 10044 / NBRC 100330 / Delta H)</name>
    <name type="common">Methanobacterium thermoautotrophicum</name>
    <dbReference type="NCBI Taxonomy" id="187420"/>
    <lineage>
        <taxon>Archaea</taxon>
        <taxon>Methanobacteriati</taxon>
        <taxon>Methanobacteriota</taxon>
        <taxon>Methanomada group</taxon>
        <taxon>Methanobacteria</taxon>
        <taxon>Methanobacteriales</taxon>
        <taxon>Methanobacteriaceae</taxon>
        <taxon>Methanothermobacter</taxon>
    </lineage>
</organism>
<accession>O27041</accession>
<comment type="function">
    <text evidence="1">Component of the A-type ATP synthase that produces ATP from ADP in the presence of a proton gradient across the membrane.</text>
</comment>
<comment type="subunit">
    <text evidence="1">Has multiple subunits with at least A(3), B(3), C, D, E, F, H, I and proteolipid K(x).</text>
</comment>
<comment type="subcellular location">
    <subcellularLocation>
        <location evidence="3">Cell membrane</location>
        <topology evidence="3">Multi-pass membrane protein</topology>
    </subcellularLocation>
</comment>
<comment type="similarity">
    <text evidence="3">Belongs to the V-ATPase 116 kDa subunit family.</text>
</comment>
<protein>
    <recommendedName>
        <fullName evidence="3">A-type ATP synthase subunit I</fullName>
    </recommendedName>
</protein>